<gene>
    <name type="primary">rps12</name>
</gene>
<accession>Q9TLV6</accession>
<proteinExistence type="inferred from homology"/>
<sequence>MPTIQQLIRFERKQIVGTSKSAALESCPQKKGVCTKVYTTTPKKPNSALRKVARVRLTSGFEITAYIPGIGHNLQEHSVVLIRGGRVKDLPGVRYHIIRGALDSTGVKNRLRARSKYGASKPKK</sequence>
<geneLocation type="chloroplast"/>
<organism>
    <name type="scientific">Cyanidium caldarium</name>
    <name type="common">Red alga</name>
    <dbReference type="NCBI Taxonomy" id="2771"/>
    <lineage>
        <taxon>Eukaryota</taxon>
        <taxon>Rhodophyta</taxon>
        <taxon>Bangiophyceae</taxon>
        <taxon>Cyanidiales</taxon>
        <taxon>Cyanidiaceae</taxon>
        <taxon>Cyanidium</taxon>
    </lineage>
</organism>
<keyword id="KW-0150">Chloroplast</keyword>
<keyword id="KW-0934">Plastid</keyword>
<keyword id="KW-0687">Ribonucleoprotein</keyword>
<keyword id="KW-0689">Ribosomal protein</keyword>
<keyword id="KW-0694">RNA-binding</keyword>
<keyword id="KW-0699">rRNA-binding</keyword>
<name>RR12_CYACA</name>
<reference key="1">
    <citation type="journal article" date="2000" name="J. Mol. Evol.">
        <title>The structure and gene repertoire of an ancient red algal plastid genome.</title>
        <authorList>
            <person name="Gloeckner G."/>
            <person name="Rosenthal A."/>
            <person name="Valentin K.-U."/>
        </authorList>
    </citation>
    <scope>NUCLEOTIDE SEQUENCE [LARGE SCALE GENOMIC DNA]</scope>
    <source>
        <strain>RK-1</strain>
    </source>
</reference>
<evidence type="ECO:0000250" key="1"/>
<evidence type="ECO:0000305" key="2"/>
<protein>
    <recommendedName>
        <fullName evidence="2">Small ribosomal subunit protein uS12c</fullName>
    </recommendedName>
    <alternativeName>
        <fullName>30S ribosomal protein S12, chloroplastic</fullName>
    </alternativeName>
</protein>
<feature type="chain" id="PRO_0000146399" description="Small ribosomal subunit protein uS12c">
    <location>
        <begin position="1"/>
        <end position="124"/>
    </location>
</feature>
<dbReference type="EMBL" id="AF022186">
    <property type="protein sequence ID" value="AAF12932.1"/>
    <property type="molecule type" value="Genomic_DNA"/>
</dbReference>
<dbReference type="RefSeq" id="NP_045162.1">
    <property type="nucleotide sequence ID" value="NC_001840.1"/>
</dbReference>
<dbReference type="SMR" id="Q9TLV6"/>
<dbReference type="GeneID" id="800278"/>
<dbReference type="GO" id="GO:0009507">
    <property type="term" value="C:chloroplast"/>
    <property type="evidence" value="ECO:0007669"/>
    <property type="project" value="UniProtKB-SubCell"/>
</dbReference>
<dbReference type="GO" id="GO:0015935">
    <property type="term" value="C:small ribosomal subunit"/>
    <property type="evidence" value="ECO:0007669"/>
    <property type="project" value="InterPro"/>
</dbReference>
<dbReference type="GO" id="GO:0019843">
    <property type="term" value="F:rRNA binding"/>
    <property type="evidence" value="ECO:0007669"/>
    <property type="project" value="UniProtKB-UniRule"/>
</dbReference>
<dbReference type="GO" id="GO:0003735">
    <property type="term" value="F:structural constituent of ribosome"/>
    <property type="evidence" value="ECO:0007669"/>
    <property type="project" value="InterPro"/>
</dbReference>
<dbReference type="GO" id="GO:0006412">
    <property type="term" value="P:translation"/>
    <property type="evidence" value="ECO:0007669"/>
    <property type="project" value="UniProtKB-UniRule"/>
</dbReference>
<dbReference type="CDD" id="cd03368">
    <property type="entry name" value="Ribosomal_S12"/>
    <property type="match status" value="1"/>
</dbReference>
<dbReference type="FunFam" id="2.40.50.140:FF:000001">
    <property type="entry name" value="30S ribosomal protein S12"/>
    <property type="match status" value="1"/>
</dbReference>
<dbReference type="Gene3D" id="2.40.50.140">
    <property type="entry name" value="Nucleic acid-binding proteins"/>
    <property type="match status" value="1"/>
</dbReference>
<dbReference type="HAMAP" id="MF_00403_B">
    <property type="entry name" value="Ribosomal_uS12_B"/>
    <property type="match status" value="1"/>
</dbReference>
<dbReference type="InterPro" id="IPR012340">
    <property type="entry name" value="NA-bd_OB-fold"/>
</dbReference>
<dbReference type="InterPro" id="IPR006032">
    <property type="entry name" value="Ribosomal_uS12"/>
</dbReference>
<dbReference type="InterPro" id="IPR005679">
    <property type="entry name" value="Ribosomal_uS12_bac"/>
</dbReference>
<dbReference type="NCBIfam" id="TIGR00981">
    <property type="entry name" value="rpsL_bact"/>
    <property type="match status" value="1"/>
</dbReference>
<dbReference type="PANTHER" id="PTHR11652">
    <property type="entry name" value="30S RIBOSOMAL PROTEIN S12 FAMILY MEMBER"/>
    <property type="match status" value="1"/>
</dbReference>
<dbReference type="Pfam" id="PF00164">
    <property type="entry name" value="Ribosom_S12_S23"/>
    <property type="match status" value="1"/>
</dbReference>
<dbReference type="PIRSF" id="PIRSF002133">
    <property type="entry name" value="Ribosomal_S12/S23"/>
    <property type="match status" value="1"/>
</dbReference>
<dbReference type="PRINTS" id="PR01034">
    <property type="entry name" value="RIBOSOMALS12"/>
</dbReference>
<dbReference type="SUPFAM" id="SSF50249">
    <property type="entry name" value="Nucleic acid-binding proteins"/>
    <property type="match status" value="1"/>
</dbReference>
<dbReference type="PROSITE" id="PS00055">
    <property type="entry name" value="RIBOSOMAL_S12"/>
    <property type="match status" value="1"/>
</dbReference>
<comment type="function">
    <text evidence="1">With S4 and S5 plays an important role in translational accuracy. Located at the interface of the 30S and 50S subunits (By similarity).</text>
</comment>
<comment type="subunit">
    <text evidence="1">Part of the 30S ribosomal subunit.</text>
</comment>
<comment type="subcellular location">
    <subcellularLocation>
        <location>Plastid</location>
        <location>Chloroplast</location>
    </subcellularLocation>
</comment>
<comment type="similarity">
    <text evidence="2">Belongs to the universal ribosomal protein uS12 family.</text>
</comment>